<sequence>MPLSYQHFRRLLLLDDEAGPLEEELPRLADEDLNRRVAEDLNLGNLNVSIPWTHKVGNFTGLYSSTVPVFNPYWKTPSFPNIHLHQDIIKKCEQFVGPLTVNEKRRLQLIMPARFYPKVTKYLPLDKGIKPYYPEHLVNHYFQTRHYLHTLWKAGILYKRETTHSASFCGSPYSWEQELQHGAESFHQQSSGILSRPPVGSSLQSKHSKSRLGLQSQQGHLARRQQGRSWSIRARIHPTARRPFGVEPSGSGHNTNLASKSASCLYQSPDRKAAYPAVSTFEKHSSSGHAVELHNLPPNSARSQGERPVFPCWWLQFRNSKPCSDYCLSHIVNLLEDWGPCAEHGEHHIRTPRTPARVTGGVFLVDKNPHNTAESRLVVDFSQFSRGNYRVSWPKFAVPNLQSLTNLLSSNLSWLSLDVSAAFYHLPLHPAAMPHLLVGSSGLSRYVARLSSNSRIFNHQRGTMQNLHDYCSRNLYVSLLLLYKTFGRKLHLYSHPIILGFRKIPMGVGLSPFLLAQFTSAICSVVRRAFPHCLAFSYMDDVVLGAKSVSHLESLFTAVTNFLLSLGIHLNPNKTKRWGYSLNFMGYVIGCYGSLPQDHIIQKIKECFRKLPVNRPIDWKVCQRIVGLLGFAAPFTQCGYPALMPLYACIQSRQAFTFSPTYKAFLCQQYLNLYPVARQRPGLCQVFADATPTGWGLVMGHQRMRGTFLAPLPIHTAELLAACFARSRSGANILGTDNSVVLSRKYTSFPWLLGCAANWILRGTSFVYVPSALNPADDPSRGRLGLSRPLLRLPFRPTTGRTSLYADSPSVPSHLPDRVHFASPLHVAWRPP</sequence>
<dbReference type="EC" id="2.7.7.7" evidence="1"/>
<dbReference type="EC" id="2.7.7.49" evidence="1"/>
<dbReference type="EC" id="3.1.26.4" evidence="1"/>
<dbReference type="EMBL" id="AF043594">
    <property type="protein sequence ID" value="AAC40810.1"/>
    <property type="molecule type" value="Genomic_DNA"/>
</dbReference>
<dbReference type="PIR" id="S71785">
    <property type="entry name" value="S71785"/>
</dbReference>
<dbReference type="Proteomes" id="UP000008283">
    <property type="component" value="Genome"/>
</dbReference>
<dbReference type="GO" id="GO:0003677">
    <property type="term" value="F:DNA binding"/>
    <property type="evidence" value="ECO:0007669"/>
    <property type="project" value="UniProtKB-UniRule"/>
</dbReference>
<dbReference type="GO" id="GO:0003887">
    <property type="term" value="F:DNA-directed DNA polymerase activity"/>
    <property type="evidence" value="ECO:0007669"/>
    <property type="project" value="UniProtKB-UniRule"/>
</dbReference>
<dbReference type="GO" id="GO:0046872">
    <property type="term" value="F:metal ion binding"/>
    <property type="evidence" value="ECO:0007669"/>
    <property type="project" value="UniProtKB-UniRule"/>
</dbReference>
<dbReference type="GO" id="GO:0003964">
    <property type="term" value="F:RNA-directed DNA polymerase activity"/>
    <property type="evidence" value="ECO:0007669"/>
    <property type="project" value="UniProtKB-UniRule"/>
</dbReference>
<dbReference type="GO" id="GO:0004523">
    <property type="term" value="F:RNA-DNA hybrid ribonuclease activity"/>
    <property type="evidence" value="ECO:0007669"/>
    <property type="project" value="UniProtKB-UniRule"/>
</dbReference>
<dbReference type="GO" id="GO:0006260">
    <property type="term" value="P:DNA replication"/>
    <property type="evidence" value="ECO:0007669"/>
    <property type="project" value="UniProtKB-UniRule"/>
</dbReference>
<dbReference type="GO" id="GO:0052170">
    <property type="term" value="P:symbiont-mediated suppression of host innate immune response"/>
    <property type="evidence" value="ECO:0007669"/>
    <property type="project" value="UniProtKB-UniRule"/>
</dbReference>
<dbReference type="FunFam" id="3.30.70.270:FF:000009">
    <property type="entry name" value="Protein P"/>
    <property type="match status" value="1"/>
</dbReference>
<dbReference type="Gene3D" id="3.30.70.270">
    <property type="match status" value="1"/>
</dbReference>
<dbReference type="HAMAP" id="MF_04073">
    <property type="entry name" value="HBV_DPOL"/>
    <property type="match status" value="1"/>
</dbReference>
<dbReference type="InterPro" id="IPR043502">
    <property type="entry name" value="DNA/RNA_pol_sf"/>
</dbReference>
<dbReference type="InterPro" id="IPR001462">
    <property type="entry name" value="DNApol_viral_C"/>
</dbReference>
<dbReference type="InterPro" id="IPR000201">
    <property type="entry name" value="DNApol_viral_N"/>
</dbReference>
<dbReference type="InterPro" id="IPR037531">
    <property type="entry name" value="HBV_DPOL"/>
</dbReference>
<dbReference type="InterPro" id="IPR043128">
    <property type="entry name" value="Rev_trsase/Diguanyl_cyclase"/>
</dbReference>
<dbReference type="InterPro" id="IPR000477">
    <property type="entry name" value="RT_dom"/>
</dbReference>
<dbReference type="InterPro" id="IPR051320">
    <property type="entry name" value="Viral_Replic_Matur_Polypro"/>
</dbReference>
<dbReference type="PANTHER" id="PTHR33064">
    <property type="entry name" value="POL PROTEIN"/>
    <property type="match status" value="1"/>
</dbReference>
<dbReference type="PANTHER" id="PTHR33064:SF37">
    <property type="entry name" value="RIBONUCLEASE H"/>
    <property type="match status" value="1"/>
</dbReference>
<dbReference type="Pfam" id="PF00336">
    <property type="entry name" value="DNA_pol_viral_C"/>
    <property type="match status" value="1"/>
</dbReference>
<dbReference type="Pfam" id="PF00242">
    <property type="entry name" value="DNA_pol_viral_N"/>
    <property type="match status" value="1"/>
</dbReference>
<dbReference type="Pfam" id="PF00078">
    <property type="entry name" value="RVT_1"/>
    <property type="match status" value="1"/>
</dbReference>
<dbReference type="SUPFAM" id="SSF56672">
    <property type="entry name" value="DNA/RNA polymerases"/>
    <property type="match status" value="1"/>
</dbReference>
<dbReference type="PROSITE" id="PS50878">
    <property type="entry name" value="RT_POL"/>
    <property type="match status" value="1"/>
</dbReference>
<keyword id="KW-0235">DNA replication</keyword>
<keyword id="KW-0238">DNA-binding</keyword>
<keyword id="KW-0239">DNA-directed DNA polymerase</keyword>
<keyword id="KW-0255">Endonuclease</keyword>
<keyword id="KW-0945">Host-virus interaction</keyword>
<keyword id="KW-0378">Hydrolase</keyword>
<keyword id="KW-1090">Inhibition of host innate immune response by virus</keyword>
<keyword id="KW-1113">Inhibition of host RLR pathway by virus</keyword>
<keyword id="KW-0460">Magnesium</keyword>
<keyword id="KW-0479">Metal-binding</keyword>
<keyword id="KW-0511">Multifunctional enzyme</keyword>
<keyword id="KW-0540">Nuclease</keyword>
<keyword id="KW-0548">Nucleotidyltransferase</keyword>
<keyword id="KW-0695">RNA-directed DNA polymerase</keyword>
<keyword id="KW-0808">Transferase</keyword>
<keyword id="KW-0899">Viral immunoevasion</keyword>
<name>DPOL_HBVD7</name>
<feature type="chain" id="PRO_0000323269" description="Protein P">
    <location>
        <begin position="1"/>
        <end position="832"/>
    </location>
</feature>
<feature type="domain" description="Reverse transcriptase" evidence="1">
    <location>
        <begin position="346"/>
        <end position="589"/>
    </location>
</feature>
<feature type="region of interest" description="Terminal protein domain (TP)" evidence="1">
    <location>
        <begin position="1"/>
        <end position="177"/>
    </location>
</feature>
<feature type="region of interest" description="Spacer" evidence="1">
    <location>
        <begin position="178"/>
        <end position="335"/>
    </location>
</feature>
<feature type="region of interest" description="Disordered" evidence="2">
    <location>
        <begin position="186"/>
        <end position="229"/>
    </location>
</feature>
<feature type="region of interest" description="Polymerase/reverse transcriptase domain (RT)" evidence="1">
    <location>
        <begin position="336"/>
        <end position="679"/>
    </location>
</feature>
<feature type="binding site" evidence="1">
    <location>
        <position position="418"/>
    </location>
    <ligand>
        <name>Mg(2+)</name>
        <dbReference type="ChEBI" id="CHEBI:18420"/>
        <note>catalytic</note>
    </ligand>
</feature>
<feature type="binding site" evidence="1">
    <location>
        <position position="540"/>
    </location>
    <ligand>
        <name>Mg(2+)</name>
        <dbReference type="ChEBI" id="CHEBI:18420"/>
        <note>catalytic</note>
    </ligand>
</feature>
<feature type="binding site" evidence="1">
    <location>
        <position position="541"/>
    </location>
    <ligand>
        <name>Mg(2+)</name>
        <dbReference type="ChEBI" id="CHEBI:18420"/>
        <note>catalytic</note>
    </ligand>
</feature>
<feature type="site" description="Priming of reverse-transcription by covalently linking the first nucleotide of the (-)DNA" evidence="1">
    <location>
        <position position="63"/>
    </location>
</feature>
<protein>
    <recommendedName>
        <fullName evidence="1">Protein P</fullName>
    </recommendedName>
    <domain>
        <recommendedName>
            <fullName evidence="1">DNA-directed DNA polymerase</fullName>
            <ecNumber evidence="1">2.7.7.7</ecNumber>
        </recommendedName>
    </domain>
    <domain>
        <recommendedName>
            <fullName evidence="1">RNA-directed DNA polymerase</fullName>
            <ecNumber evidence="1">2.7.7.49</ecNumber>
        </recommendedName>
    </domain>
    <domain>
        <recommendedName>
            <fullName evidence="1">Ribonuclease H</fullName>
            <ecNumber evidence="1">3.1.26.4</ecNumber>
        </recommendedName>
    </domain>
</protein>
<organism>
    <name type="scientific">Hepatitis B virus genotype D (isolate Germany/1-91/1991)</name>
    <name type="common">HBV-D</name>
    <dbReference type="NCBI Taxonomy" id="489490"/>
    <lineage>
        <taxon>Viruses</taxon>
        <taxon>Riboviria</taxon>
        <taxon>Pararnavirae</taxon>
        <taxon>Artverviricota</taxon>
        <taxon>Revtraviricetes</taxon>
        <taxon>Blubervirales</taxon>
        <taxon>Hepadnaviridae</taxon>
        <taxon>Orthohepadnavirus</taxon>
        <taxon>Hepatitis B virus</taxon>
        <taxon>hepatitis B virus genotype D</taxon>
    </lineage>
</organism>
<proteinExistence type="inferred from homology"/>
<gene>
    <name evidence="1" type="primary">P</name>
</gene>
<accession>O56655</accession>
<comment type="function">
    <text evidence="1">Multifunctional enzyme that converts the viral RNA genome into dsDNA in viral cytoplasmic capsids. This enzyme displays a DNA polymerase activity that can copy either DNA or RNA templates, and a ribonuclease H (RNase H) activity that cleaves the RNA strand of RNA-DNA heteroduplexes in a partially processive 3'- to 5'-endonucleasic mode. Neo-synthesized pregenomic RNA (pgRNA) are encapsidated together with the P protein, and reverse-transcribed inside the nucleocapsid. Initiation of reverse-transcription occurs first by binding the epsilon loop on the pgRNA genome, and is initiated by protein priming, thereby the 5'-end of (-)DNA is covalently linked to P protein. Partial (+)DNA is synthesized from the (-)DNA template and generates the relaxed circular DNA (RC-DNA) genome. After budding and infection, the RC-DNA migrates in the nucleus, and is converted into a plasmid-like covalently closed circular DNA (cccDNA). The activity of P protein does not seem to be necessary for cccDNA generation, and is presumably released from (+)DNA by host nuclear DNA repair machinery.</text>
</comment>
<comment type="catalytic activity">
    <reaction evidence="1">
        <text>DNA(n) + a 2'-deoxyribonucleoside 5'-triphosphate = DNA(n+1) + diphosphate</text>
        <dbReference type="Rhea" id="RHEA:22508"/>
        <dbReference type="Rhea" id="RHEA-COMP:17339"/>
        <dbReference type="Rhea" id="RHEA-COMP:17340"/>
        <dbReference type="ChEBI" id="CHEBI:33019"/>
        <dbReference type="ChEBI" id="CHEBI:61560"/>
        <dbReference type="ChEBI" id="CHEBI:173112"/>
        <dbReference type="EC" id="2.7.7.7"/>
    </reaction>
</comment>
<comment type="catalytic activity">
    <reaction evidence="1">
        <text>DNA(n) + a 2'-deoxyribonucleoside 5'-triphosphate = DNA(n+1) + diphosphate</text>
        <dbReference type="Rhea" id="RHEA:22508"/>
        <dbReference type="Rhea" id="RHEA-COMP:17339"/>
        <dbReference type="Rhea" id="RHEA-COMP:17340"/>
        <dbReference type="ChEBI" id="CHEBI:33019"/>
        <dbReference type="ChEBI" id="CHEBI:61560"/>
        <dbReference type="ChEBI" id="CHEBI:173112"/>
        <dbReference type="EC" id="2.7.7.49"/>
    </reaction>
</comment>
<comment type="catalytic activity">
    <reaction evidence="1">
        <text>Endonucleolytic cleavage to 5'-phosphomonoester.</text>
        <dbReference type="EC" id="3.1.26.4"/>
    </reaction>
</comment>
<comment type="activity regulation">
    <text evidence="1">Activated by host HSP70 and HSP40 in vitro to be able to bind the epsilon loop of the pgRNA. Because deletion of the RNase H region renders the protein partly chaperone-independent, the chaperones may be needed indirectly to relieve occlusion of the RNA-binding site by this domain. Inhibited by several reverse-transcriptase inhibitors: Lamivudine, Adefovir and Entecavir.</text>
</comment>
<comment type="domain">
    <text evidence="1">Terminal protein domain (TP) is hepadnavirus-specific. Spacer domain is highly variable and separates the TP and RT domains. Polymerase/reverse-transcriptase domain (RT) and ribonuclease H domain (RH) are similar to retrovirus reverse transcriptase/RNase H.</text>
</comment>
<comment type="domain">
    <text evidence="1">The polymerase/reverse transcriptase (RT) and ribonuclease H (RH) domains are structured in five subdomains: finger, palm, thumb, connection and RNase H. Within the palm subdomain, the 'primer grip' region is thought to be involved in the positioning of the primer terminus for accommodating the incoming nucleotide. The RH domain stabilizes the association of RT with primer-template.</text>
</comment>
<comment type="miscellaneous">
    <text evidence="1">Hepadnaviral virions contain probably just one P protein molecule per particle.</text>
</comment>
<comment type="similarity">
    <text evidence="1">Belongs to the hepadnaviridae P protein family.</text>
</comment>
<reference key="1">
    <citation type="journal article" date="1998" name="Virology">
        <title>Analysis of hepatitis B virus populations in an interferon-alpha-treated patient reveals predominant mutations in the C-gene and changing e-antigenicity.</title>
        <authorList>
            <person name="Gunther S."/>
            <person name="Paulij W."/>
            <person name="Meisel H."/>
            <person name="Will H."/>
        </authorList>
    </citation>
    <scope>NUCLEOTIDE SEQUENCE [GENOMIC DNA]</scope>
</reference>
<reference key="2">
    <citation type="journal article" date="2007" name="World J. Gastroenterol.">
        <title>Hepatitis B virus replication.</title>
        <authorList>
            <person name="Beck J."/>
            <person name="Nassal M."/>
        </authorList>
    </citation>
    <scope>REVIEW</scope>
</reference>
<evidence type="ECO:0000255" key="1">
    <source>
        <dbReference type="HAMAP-Rule" id="MF_04073"/>
    </source>
</evidence>
<evidence type="ECO:0000256" key="2">
    <source>
        <dbReference type="SAM" id="MobiDB-lite"/>
    </source>
</evidence>
<organismHost>
    <name type="scientific">Homo sapiens</name>
    <name type="common">Human</name>
    <dbReference type="NCBI Taxonomy" id="9606"/>
</organismHost>
<organismHost>
    <name type="scientific">Pan troglodytes</name>
    <name type="common">Chimpanzee</name>
    <dbReference type="NCBI Taxonomy" id="9598"/>
</organismHost>